<evidence type="ECO:0000255" key="1">
    <source>
        <dbReference type="HAMAP-Rule" id="MF_00504"/>
    </source>
</evidence>
<proteinExistence type="inferred from homology"/>
<feature type="chain" id="PRO_1000014887" description="Peptidase B">
    <location>
        <begin position="1"/>
        <end position="427"/>
    </location>
</feature>
<feature type="active site" evidence="1">
    <location>
        <position position="207"/>
    </location>
</feature>
<feature type="active site" evidence="1">
    <location>
        <position position="281"/>
    </location>
</feature>
<feature type="binding site" evidence="1">
    <location>
        <position position="195"/>
    </location>
    <ligand>
        <name>Mn(2+)</name>
        <dbReference type="ChEBI" id="CHEBI:29035"/>
        <label>2</label>
    </ligand>
</feature>
<feature type="binding site" evidence="1">
    <location>
        <position position="200"/>
    </location>
    <ligand>
        <name>Mn(2+)</name>
        <dbReference type="ChEBI" id="CHEBI:29035"/>
        <label>1</label>
    </ligand>
</feature>
<feature type="binding site" evidence="1">
    <location>
        <position position="200"/>
    </location>
    <ligand>
        <name>Mn(2+)</name>
        <dbReference type="ChEBI" id="CHEBI:29035"/>
        <label>2</label>
    </ligand>
</feature>
<feature type="binding site" evidence="1">
    <location>
        <position position="218"/>
    </location>
    <ligand>
        <name>Mn(2+)</name>
        <dbReference type="ChEBI" id="CHEBI:29035"/>
        <label>2</label>
    </ligand>
</feature>
<feature type="binding site" evidence="1">
    <location>
        <position position="277"/>
    </location>
    <ligand>
        <name>Mn(2+)</name>
        <dbReference type="ChEBI" id="CHEBI:29035"/>
        <label>1</label>
    </ligand>
</feature>
<feature type="binding site" evidence="1">
    <location>
        <position position="279"/>
    </location>
    <ligand>
        <name>Mn(2+)</name>
        <dbReference type="ChEBI" id="CHEBI:29035"/>
        <label>1</label>
    </ligand>
</feature>
<feature type="binding site" evidence="1">
    <location>
        <position position="279"/>
    </location>
    <ligand>
        <name>Mn(2+)</name>
        <dbReference type="ChEBI" id="CHEBI:29035"/>
        <label>2</label>
    </ligand>
</feature>
<name>PEPB_CITK8</name>
<gene>
    <name evidence="1" type="primary">pepB</name>
    <name type="ordered locus">CKO_00258</name>
</gene>
<comment type="function">
    <text evidence="1">Probably plays an important role in intracellular peptide degradation.</text>
</comment>
<comment type="catalytic activity">
    <reaction evidence="1">
        <text>Release of an N-terminal amino acid, Xaa, from a peptide or arylamide. Xaa is preferably Glu or Asp but may be other amino acids, including Leu, Met, His, Cys and Gln.</text>
        <dbReference type="EC" id="3.4.11.23"/>
    </reaction>
</comment>
<comment type="cofactor">
    <cofactor evidence="1">
        <name>Mn(2+)</name>
        <dbReference type="ChEBI" id="CHEBI:29035"/>
    </cofactor>
    <text evidence="1">Binds 2 manganese ions per subunit.</text>
</comment>
<comment type="subunit">
    <text evidence="1">Homohexamer.</text>
</comment>
<comment type="subcellular location">
    <subcellularLocation>
        <location evidence="1">Cytoplasm</location>
    </subcellularLocation>
</comment>
<comment type="similarity">
    <text evidence="1">Belongs to the peptidase M17 family.</text>
</comment>
<reference key="1">
    <citation type="submission" date="2007-08" db="EMBL/GenBank/DDBJ databases">
        <authorList>
            <consortium name="The Citrobacter koseri Genome Sequencing Project"/>
            <person name="McClelland M."/>
            <person name="Sanderson E.K."/>
            <person name="Porwollik S."/>
            <person name="Spieth J."/>
            <person name="Clifton W.S."/>
            <person name="Latreille P."/>
            <person name="Courtney L."/>
            <person name="Wang C."/>
            <person name="Pepin K."/>
            <person name="Bhonagiri V."/>
            <person name="Nash W."/>
            <person name="Johnson M."/>
            <person name="Thiruvilangam P."/>
            <person name="Wilson R."/>
        </authorList>
    </citation>
    <scope>NUCLEOTIDE SEQUENCE [LARGE SCALE GENOMIC DNA]</scope>
    <source>
        <strain>ATCC BAA-895 / CDC 4225-83 / SGSC4696</strain>
    </source>
</reference>
<organism>
    <name type="scientific">Citrobacter koseri (strain ATCC BAA-895 / CDC 4225-83 / SGSC4696)</name>
    <dbReference type="NCBI Taxonomy" id="290338"/>
    <lineage>
        <taxon>Bacteria</taxon>
        <taxon>Pseudomonadati</taxon>
        <taxon>Pseudomonadota</taxon>
        <taxon>Gammaproteobacteria</taxon>
        <taxon>Enterobacterales</taxon>
        <taxon>Enterobacteriaceae</taxon>
        <taxon>Citrobacter</taxon>
    </lineage>
</organism>
<keyword id="KW-0031">Aminopeptidase</keyword>
<keyword id="KW-0963">Cytoplasm</keyword>
<keyword id="KW-0378">Hydrolase</keyword>
<keyword id="KW-0464">Manganese</keyword>
<keyword id="KW-0479">Metal-binding</keyword>
<keyword id="KW-0645">Protease</keyword>
<keyword id="KW-1185">Reference proteome</keyword>
<accession>A8AD60</accession>
<protein>
    <recommendedName>
        <fullName evidence="1">Peptidase B</fullName>
        <ecNumber evidence="1">3.4.11.23</ecNumber>
    </recommendedName>
    <alternativeName>
        <fullName evidence="1">Aminopeptidase B</fullName>
    </alternativeName>
</protein>
<dbReference type="EC" id="3.4.11.23" evidence="1"/>
<dbReference type="EMBL" id="CP000822">
    <property type="protein sequence ID" value="ABV11422.1"/>
    <property type="molecule type" value="Genomic_DNA"/>
</dbReference>
<dbReference type="RefSeq" id="WP_012131254.1">
    <property type="nucleotide sequence ID" value="NC_009792.1"/>
</dbReference>
<dbReference type="SMR" id="A8AD60"/>
<dbReference type="STRING" id="290338.CKO_00258"/>
<dbReference type="MEROPS" id="M17.004"/>
<dbReference type="GeneID" id="45134541"/>
<dbReference type="KEGG" id="cko:CKO_00258"/>
<dbReference type="HOGENOM" id="CLU_013734_7_1_6"/>
<dbReference type="OrthoDB" id="9809354at2"/>
<dbReference type="Proteomes" id="UP000008148">
    <property type="component" value="Chromosome"/>
</dbReference>
<dbReference type="GO" id="GO:0005737">
    <property type="term" value="C:cytoplasm"/>
    <property type="evidence" value="ECO:0007669"/>
    <property type="project" value="UniProtKB-SubCell"/>
</dbReference>
<dbReference type="GO" id="GO:0030145">
    <property type="term" value="F:manganese ion binding"/>
    <property type="evidence" value="ECO:0007669"/>
    <property type="project" value="UniProtKB-UniRule"/>
</dbReference>
<dbReference type="GO" id="GO:0070006">
    <property type="term" value="F:metalloaminopeptidase activity"/>
    <property type="evidence" value="ECO:0007669"/>
    <property type="project" value="InterPro"/>
</dbReference>
<dbReference type="GO" id="GO:0006508">
    <property type="term" value="P:proteolysis"/>
    <property type="evidence" value="ECO:0007669"/>
    <property type="project" value="UniProtKB-UniRule"/>
</dbReference>
<dbReference type="CDD" id="cd00433">
    <property type="entry name" value="Peptidase_M17"/>
    <property type="match status" value="1"/>
</dbReference>
<dbReference type="FunFam" id="3.40.630.10:FF:000037">
    <property type="entry name" value="Peptidase B"/>
    <property type="match status" value="1"/>
</dbReference>
<dbReference type="Gene3D" id="3.40.630.10">
    <property type="entry name" value="Zn peptidases"/>
    <property type="match status" value="1"/>
</dbReference>
<dbReference type="HAMAP" id="MF_00504">
    <property type="entry name" value="Aminopeptidase_M17"/>
    <property type="match status" value="1"/>
</dbReference>
<dbReference type="InterPro" id="IPR011356">
    <property type="entry name" value="Leucine_aapep/pepB"/>
</dbReference>
<dbReference type="InterPro" id="IPR047620">
    <property type="entry name" value="M17_PepB-like_N"/>
</dbReference>
<dbReference type="InterPro" id="IPR008330">
    <property type="entry name" value="Pept_M17_PepB"/>
</dbReference>
<dbReference type="InterPro" id="IPR000819">
    <property type="entry name" value="Peptidase_M17_C"/>
</dbReference>
<dbReference type="NCBIfam" id="NF003450">
    <property type="entry name" value="PRK05015.1"/>
    <property type="match status" value="1"/>
</dbReference>
<dbReference type="PANTHER" id="PTHR11963">
    <property type="entry name" value="LEUCINE AMINOPEPTIDASE-RELATED"/>
    <property type="match status" value="1"/>
</dbReference>
<dbReference type="PANTHER" id="PTHR11963:SF20">
    <property type="entry name" value="PEPTIDASE B"/>
    <property type="match status" value="1"/>
</dbReference>
<dbReference type="Pfam" id="PF12404">
    <property type="entry name" value="DUF3663"/>
    <property type="match status" value="1"/>
</dbReference>
<dbReference type="Pfam" id="PF00883">
    <property type="entry name" value="Peptidase_M17"/>
    <property type="match status" value="1"/>
</dbReference>
<dbReference type="PIRSF" id="PIRSF036388">
    <property type="entry name" value="Ctsl_amnpptdse_B"/>
    <property type="match status" value="1"/>
</dbReference>
<dbReference type="PRINTS" id="PR00481">
    <property type="entry name" value="LAMNOPPTDASE"/>
</dbReference>
<dbReference type="SUPFAM" id="SSF53187">
    <property type="entry name" value="Zn-dependent exopeptidases"/>
    <property type="match status" value="1"/>
</dbReference>
<dbReference type="PROSITE" id="PS00631">
    <property type="entry name" value="CYTOSOL_AP"/>
    <property type="match status" value="1"/>
</dbReference>
<sequence length="427" mass="46300">MTEAMKITLSTQPADARWGDKATYSINNDGITLHLNGKDDSGLIQRAARKIDGLGIKHVQLTGAGWDVERSWAFWQGYKGPKGSRKVEWPDLDDEKRKELDNRLTIIDWVRDTINAPAEELGPEQLAQRAVDLLCSVACDHVSYRITKGEDLREQNYMGLHTVGRGSDRAPVLLALDYNPTGDKDAPVYACLVGKGITFDSGGYSIKQSAFMDSMKSDMGGAATVTGALAFAITRGLNKRVKLYLCCADNLISGNAFKLGDIIHYRNGKNVEVMNTDAEGRLVLADGLIDASAQKPELIIDAATLTGAAKTALGNDYHALFSFDDALAGRLLASAAEENEPFWRLPLAEFHRNQLPSNFAELNNTGSAAYPAGASTAAGFLSHFVENYQQGWLHIDCSATYRKAPVEQWSAGATGLGVRTIANLLTA</sequence>